<name>YR329_MIMIV</name>
<keyword id="KW-1185">Reference proteome</keyword>
<accession>Q5UQS4</accession>
<protein>
    <recommendedName>
        <fullName>Uncharacterized protein R329</fullName>
    </recommendedName>
</protein>
<reference key="1">
    <citation type="journal article" date="2004" name="Science">
        <title>The 1.2-megabase genome sequence of Mimivirus.</title>
        <authorList>
            <person name="Raoult D."/>
            <person name="Audic S."/>
            <person name="Robert C."/>
            <person name="Abergel C."/>
            <person name="Renesto P."/>
            <person name="Ogata H."/>
            <person name="La Scola B."/>
            <person name="Susan M."/>
            <person name="Claverie J.-M."/>
        </authorList>
    </citation>
    <scope>NUCLEOTIDE SEQUENCE [LARGE SCALE GENOMIC DNA]</scope>
    <source>
        <strain>Rowbotham-Bradford</strain>
    </source>
</reference>
<sequence length="177" mass="20898">MSVSDIISKSLIEYDSTTPTIQYLIENTYFEGYKTNSDTERSRLKFIHKDTNKVLFETEIETLAIYYDKLNIWSWSWSQVGLYNSENYLAKEMLLYALKLGYDMSYIKSIITTSRGVIRDPIQVDINLAIGSGIIKQPYIYPYVYEVEKRKLYYYIILLNKQELDKLSKKLNKQSNE</sequence>
<organism>
    <name type="scientific">Acanthamoeba polyphaga mimivirus</name>
    <name type="common">APMV</name>
    <dbReference type="NCBI Taxonomy" id="212035"/>
    <lineage>
        <taxon>Viruses</taxon>
        <taxon>Varidnaviria</taxon>
        <taxon>Bamfordvirae</taxon>
        <taxon>Nucleocytoviricota</taxon>
        <taxon>Megaviricetes</taxon>
        <taxon>Imitervirales</taxon>
        <taxon>Mimiviridae</taxon>
        <taxon>Megamimivirinae</taxon>
        <taxon>Mimivirus</taxon>
        <taxon>Mimivirus bradfordmassiliense</taxon>
    </lineage>
</organism>
<gene>
    <name type="ordered locus">MIMI_R329</name>
</gene>
<feature type="chain" id="PRO_0000244014" description="Uncharacterized protein R329">
    <location>
        <begin position="1"/>
        <end position="177"/>
    </location>
</feature>
<dbReference type="EMBL" id="AY653733">
    <property type="protein sequence ID" value="AAV50598.1"/>
    <property type="molecule type" value="Genomic_DNA"/>
</dbReference>
<dbReference type="SMR" id="Q5UQS4"/>
<dbReference type="KEGG" id="vg:9924947"/>
<dbReference type="OrthoDB" id="16558at10239"/>
<dbReference type="Proteomes" id="UP000001134">
    <property type="component" value="Genome"/>
</dbReference>
<organismHost>
    <name type="scientific">Acanthamoeba polyphaga</name>
    <name type="common">Amoeba</name>
    <dbReference type="NCBI Taxonomy" id="5757"/>
</organismHost>
<proteinExistence type="predicted"/>